<organism>
    <name type="scientific">Caenorhabditis elegans</name>
    <dbReference type="NCBI Taxonomy" id="6239"/>
    <lineage>
        <taxon>Eukaryota</taxon>
        <taxon>Metazoa</taxon>
        <taxon>Ecdysozoa</taxon>
        <taxon>Nematoda</taxon>
        <taxon>Chromadorea</taxon>
        <taxon>Rhabditida</taxon>
        <taxon>Rhabditina</taxon>
        <taxon>Rhabditomorpha</taxon>
        <taxon>Rhabditoidea</taxon>
        <taxon>Rhabditidae</taxon>
        <taxon>Peloderinae</taxon>
        <taxon>Caenorhabditis</taxon>
    </lineage>
</organism>
<reference key="1">
    <citation type="journal article" date="1994" name="Nature">
        <title>2.2 Mb of contiguous nucleotide sequence from chromosome III of C. elegans.</title>
        <authorList>
            <person name="Wilson R."/>
            <person name="Ainscough R."/>
            <person name="Anderson K."/>
            <person name="Baynes C."/>
            <person name="Berks M."/>
            <person name="Bonfield J."/>
            <person name="Burton J."/>
            <person name="Connell M."/>
            <person name="Copsey T."/>
            <person name="Cooper J."/>
            <person name="Coulson A."/>
            <person name="Craxton M."/>
            <person name="Dear S."/>
            <person name="Du Z."/>
            <person name="Durbin R."/>
            <person name="Favello A."/>
            <person name="Fraser A."/>
            <person name="Fulton L."/>
            <person name="Gardner A."/>
            <person name="Green P."/>
            <person name="Hawkins T."/>
            <person name="Hillier L."/>
            <person name="Jier M."/>
            <person name="Johnston L."/>
            <person name="Jones M."/>
            <person name="Kershaw J."/>
            <person name="Kirsten J."/>
            <person name="Laisster N."/>
            <person name="Latreille P."/>
            <person name="Lightning J."/>
            <person name="Lloyd C."/>
            <person name="Mortimore B."/>
            <person name="O'Callaghan M."/>
            <person name="Parsons J."/>
            <person name="Percy C."/>
            <person name="Rifken L."/>
            <person name="Roopra A."/>
            <person name="Saunders D."/>
            <person name="Shownkeen R."/>
            <person name="Sims M."/>
            <person name="Smaldon N."/>
            <person name="Smith A."/>
            <person name="Smith M."/>
            <person name="Sonnhammer E."/>
            <person name="Staden R."/>
            <person name="Sulston J."/>
            <person name="Thierry-Mieg J."/>
            <person name="Thomas K."/>
            <person name="Vaudin M."/>
            <person name="Vaughan K."/>
            <person name="Waterston R."/>
            <person name="Watson A."/>
            <person name="Weinstock L."/>
            <person name="Wilkinson-Sproat J."/>
            <person name="Wohldman P."/>
        </authorList>
    </citation>
    <scope>NUCLEOTIDE SEQUENCE [LARGE SCALE GENOMIC DNA]</scope>
    <source>
        <strain>Bristol N2</strain>
    </source>
</reference>
<reference key="2">
    <citation type="journal article" date="1998" name="Science">
        <title>Genome sequence of the nematode C. elegans: a platform for investigating biology.</title>
        <authorList>
            <consortium name="The C. elegans sequencing consortium"/>
        </authorList>
    </citation>
    <scope>NUCLEOTIDE SEQUENCE [LARGE SCALE GENOMIC DNA]</scope>
    <source>
        <strain>Bristol N2</strain>
    </source>
</reference>
<name>YKZ3_CAEEL</name>
<dbReference type="EMBL" id="FO080531">
    <property type="protein sequence ID" value="CCD64437.1"/>
    <property type="molecule type" value="Genomic_DNA"/>
</dbReference>
<dbReference type="PIR" id="S44760">
    <property type="entry name" value="S44760"/>
</dbReference>
<dbReference type="RefSeq" id="NP_498771.1">
    <property type="nucleotide sequence ID" value="NM_066370.5"/>
</dbReference>
<dbReference type="BioGRID" id="41350">
    <property type="interactions" value="2"/>
</dbReference>
<dbReference type="FunCoup" id="P34330">
    <property type="interactions" value="201"/>
</dbReference>
<dbReference type="PaxDb" id="6239-C14B9.3"/>
<dbReference type="EnsemblMetazoa" id="C14B9.3.1">
    <property type="protein sequence ID" value="C14B9.3.1"/>
    <property type="gene ID" value="WBGene00015753"/>
</dbReference>
<dbReference type="GeneID" id="176144"/>
<dbReference type="KEGG" id="cel:CELE_C14B9.3"/>
<dbReference type="UCSC" id="C14B9.3">
    <property type="organism name" value="c. elegans"/>
</dbReference>
<dbReference type="AGR" id="WB:WBGene00015753"/>
<dbReference type="CTD" id="176144"/>
<dbReference type="WormBase" id="C14B9.3">
    <property type="protein sequence ID" value="CE26868"/>
    <property type="gene ID" value="WBGene00015753"/>
</dbReference>
<dbReference type="eggNOG" id="ENOG502S7UA">
    <property type="taxonomic scope" value="Eukaryota"/>
</dbReference>
<dbReference type="GeneTree" id="ENSGT00510000047299"/>
<dbReference type="HOGENOM" id="CLU_069895_0_0_1"/>
<dbReference type="InParanoid" id="P34330"/>
<dbReference type="OMA" id="SGECEPI"/>
<dbReference type="OrthoDB" id="68581at2759"/>
<dbReference type="PRO" id="PR:P34330"/>
<dbReference type="Proteomes" id="UP000001940">
    <property type="component" value="Chromosome III"/>
</dbReference>
<dbReference type="Bgee" id="WBGene00015753">
    <property type="expression patterns" value="Expressed in material anatomical entity and 4 other cell types or tissues"/>
</dbReference>
<dbReference type="GO" id="GO:0005789">
    <property type="term" value="C:endoplasmic reticulum membrane"/>
    <property type="evidence" value="ECO:0000318"/>
    <property type="project" value="GO_Central"/>
</dbReference>
<dbReference type="GO" id="GO:0000139">
    <property type="term" value="C:Golgi membrane"/>
    <property type="evidence" value="ECO:0007669"/>
    <property type="project" value="InterPro"/>
</dbReference>
<dbReference type="GO" id="GO:0006506">
    <property type="term" value="P:GPI anchor biosynthetic process"/>
    <property type="evidence" value="ECO:0000318"/>
    <property type="project" value="GO_Central"/>
</dbReference>
<dbReference type="InterPro" id="IPR019402">
    <property type="entry name" value="Frag1/DRAM/Sfk1"/>
</dbReference>
<dbReference type="InterPro" id="IPR039545">
    <property type="entry name" value="PGAP2"/>
</dbReference>
<dbReference type="PANTHER" id="PTHR12892">
    <property type="entry name" value="FGF RECEPTOR ACTIVATING PROTEIN 1"/>
    <property type="match status" value="1"/>
</dbReference>
<dbReference type="PANTHER" id="PTHR12892:SF8">
    <property type="entry name" value="PROTEIN CBG16685"/>
    <property type="match status" value="1"/>
</dbReference>
<dbReference type="Pfam" id="PF10277">
    <property type="entry name" value="Frag1"/>
    <property type="match status" value="1"/>
</dbReference>
<keyword id="KW-1185">Reference proteome</keyword>
<sequence>MAVVASTSDDFYANYAFESADRKDENSIRVPRSTEDNRRLKYGHAEDDNSDIAYLNFPVIVPSLVFTVISMGCFVGGIFTSLKSDYIPDERELIRGYVIEYGSSRFRCNTTIPFPADGLPSILNLFELNVIGNVLFRYAVCIPIVIRVFNALTIRNLLRHEYDKKFSSLHKVMADSMPIFTFVEAFMMSLFSIVTVHEDFPEANRFFKIVFAMSSVVSMLTTTTVMFAFSSNSESKWDTVSMIMKLISVVIYVYLMPQYMQYHQSSITFPICHSYMPQLFALMEYFIIIAYATFHLSFLIDIRNISFICFPRSSSGECEPIDPINFKKGAKYEHCRAFEYNQRRILSL</sequence>
<protein>
    <recommendedName>
        <fullName>Uncharacterized protein C14B9.3</fullName>
    </recommendedName>
</protein>
<gene>
    <name type="ORF">C14B9.3</name>
</gene>
<proteinExistence type="predicted"/>
<feature type="chain" id="PRO_0000065178" description="Uncharacterized protein C14B9.3">
    <location>
        <begin position="1"/>
        <end position="348"/>
    </location>
</feature>
<accession>P34330</accession>